<name>COMK_BACSU</name>
<accession>P40396</accession>
<feature type="chain" id="PRO_0000090012" description="Competence transcription factor">
    <location>
        <begin position="1"/>
        <end position="192"/>
    </location>
</feature>
<gene>
    <name type="primary">comK</name>
    <name type="ordered locus">BSU10420</name>
</gene>
<proteinExistence type="evidence at protein level"/>
<keyword id="KW-0010">Activator</keyword>
<keyword id="KW-0178">Competence</keyword>
<keyword id="KW-0238">DNA-binding</keyword>
<keyword id="KW-1185">Reference proteome</keyword>
<keyword id="KW-0678">Repressor</keyword>
<keyword id="KW-0804">Transcription</keyword>
<keyword id="KW-0805">Transcription regulation</keyword>
<dbReference type="EMBL" id="S70734">
    <property type="protein sequence ID" value="AAB30864.1"/>
    <property type="molecule type" value="Genomic_DNA"/>
</dbReference>
<dbReference type="EMBL" id="Y14084">
    <property type="protein sequence ID" value="CAA74548.1"/>
    <property type="status" value="ALT_INIT"/>
    <property type="molecule type" value="Genomic_DNA"/>
</dbReference>
<dbReference type="EMBL" id="AL009126">
    <property type="protein sequence ID" value="CAB12882.1"/>
    <property type="molecule type" value="Genomic_DNA"/>
</dbReference>
<dbReference type="PIR" id="S43611">
    <property type="entry name" value="S43611"/>
</dbReference>
<dbReference type="RefSeq" id="NP_388923.1">
    <property type="nucleotide sequence ID" value="NC_000964.3"/>
</dbReference>
<dbReference type="RefSeq" id="WP_003245329.1">
    <property type="nucleotide sequence ID" value="NZ_OZ025638.1"/>
</dbReference>
<dbReference type="SMR" id="P40396"/>
<dbReference type="FunCoup" id="P40396">
    <property type="interactions" value="71"/>
</dbReference>
<dbReference type="IntAct" id="P40396">
    <property type="interactions" value="1"/>
</dbReference>
<dbReference type="MINT" id="P40396"/>
<dbReference type="STRING" id="224308.BSU10420"/>
<dbReference type="PaxDb" id="224308-BSU10420"/>
<dbReference type="EnsemblBacteria" id="CAB12882">
    <property type="protein sequence ID" value="CAB12882"/>
    <property type="gene ID" value="BSU_10420"/>
</dbReference>
<dbReference type="GeneID" id="936338"/>
<dbReference type="KEGG" id="bsu:BSU10420"/>
<dbReference type="PATRIC" id="fig|224308.179.peg.1120"/>
<dbReference type="eggNOG" id="COG4903">
    <property type="taxonomic scope" value="Bacteria"/>
</dbReference>
<dbReference type="InParanoid" id="P40396"/>
<dbReference type="OrthoDB" id="2417337at2"/>
<dbReference type="PhylomeDB" id="P40396"/>
<dbReference type="BioCyc" id="BSUB:BSU10420-MONOMER"/>
<dbReference type="Proteomes" id="UP000001570">
    <property type="component" value="Chromosome"/>
</dbReference>
<dbReference type="GO" id="GO:0003677">
    <property type="term" value="F:DNA binding"/>
    <property type="evidence" value="ECO:0007669"/>
    <property type="project" value="UniProtKB-KW"/>
</dbReference>
<dbReference type="GO" id="GO:0030420">
    <property type="term" value="P:establishment of competence for transformation"/>
    <property type="evidence" value="ECO:0007669"/>
    <property type="project" value="UniProtKB-KW"/>
</dbReference>
<dbReference type="InterPro" id="IPR010461">
    <property type="entry name" value="ComK"/>
</dbReference>
<dbReference type="Pfam" id="PF06338">
    <property type="entry name" value="ComK"/>
    <property type="match status" value="1"/>
</dbReference>
<dbReference type="PIRSF" id="PIRSF011560">
    <property type="entry name" value="ComK"/>
    <property type="match status" value="1"/>
</dbReference>
<sequence>MSQKTDAPLESYEVNGATIAVLPEEIDGKICSKIIEKDCVFYVNMKPLQIVDRSCRFFGSSYAGRKAGTYEVTKISHKPPIMVDPSNQIFLFPTLSSTRPQCGWISHVHVKEFKATEFDDTEVTFSNGKTMELPISYNSFENQVYRTAWLRTKFQDRIDHRVPKRQEFMLYPKEERTKMIYDFILRELGERY</sequence>
<reference key="1">
    <citation type="journal article" date="1994" name="Mol. Microbiol.">
        <title>Molecular cloning and sequence of comK, a gene required for genetic competence in Bacillus subtilis.</title>
        <authorList>
            <person name="van Sinderen D."/>
            <person name="ten Berge A."/>
            <person name="Hayema B.J."/>
            <person name="Hamoen L."/>
            <person name="Venema G."/>
        </authorList>
    </citation>
    <scope>NUCLEOTIDE SEQUENCE [GENOMIC DNA]</scope>
    <scope>FUNCTION</scope>
    <scope>INDUCTION</scope>
    <scope>DISRUPTION PHENOTYPE</scope>
</reference>
<reference key="2">
    <citation type="journal article" date="1998" name="Microbiology">
        <title>The 172 kb prkA-addAB region from 83 degrees to 97 degrees of the Bacillus subtilis chromosome contains several dysfunctional genes, the glyB marker, many genes encoding transporter proteins, and the ubiquitous hit gene.</title>
        <authorList>
            <person name="Noback M.A."/>
            <person name="Holsappel S."/>
            <person name="Kiewiet R."/>
            <person name="Terpstra P."/>
            <person name="Wambutt R."/>
            <person name="Wedler H."/>
            <person name="Venema G."/>
            <person name="Bron S."/>
        </authorList>
    </citation>
    <scope>NUCLEOTIDE SEQUENCE [GENOMIC DNA]</scope>
    <source>
        <strain>168</strain>
    </source>
</reference>
<reference key="3">
    <citation type="journal article" date="1997" name="Nature">
        <title>The complete genome sequence of the Gram-positive bacterium Bacillus subtilis.</title>
        <authorList>
            <person name="Kunst F."/>
            <person name="Ogasawara N."/>
            <person name="Moszer I."/>
            <person name="Albertini A.M."/>
            <person name="Alloni G."/>
            <person name="Azevedo V."/>
            <person name="Bertero M.G."/>
            <person name="Bessieres P."/>
            <person name="Bolotin A."/>
            <person name="Borchert S."/>
            <person name="Borriss R."/>
            <person name="Boursier L."/>
            <person name="Brans A."/>
            <person name="Braun M."/>
            <person name="Brignell S.C."/>
            <person name="Bron S."/>
            <person name="Brouillet S."/>
            <person name="Bruschi C.V."/>
            <person name="Caldwell B."/>
            <person name="Capuano V."/>
            <person name="Carter N.M."/>
            <person name="Choi S.-K."/>
            <person name="Codani J.-J."/>
            <person name="Connerton I.F."/>
            <person name="Cummings N.J."/>
            <person name="Daniel R.A."/>
            <person name="Denizot F."/>
            <person name="Devine K.M."/>
            <person name="Duesterhoeft A."/>
            <person name="Ehrlich S.D."/>
            <person name="Emmerson P.T."/>
            <person name="Entian K.-D."/>
            <person name="Errington J."/>
            <person name="Fabret C."/>
            <person name="Ferrari E."/>
            <person name="Foulger D."/>
            <person name="Fritz C."/>
            <person name="Fujita M."/>
            <person name="Fujita Y."/>
            <person name="Fuma S."/>
            <person name="Galizzi A."/>
            <person name="Galleron N."/>
            <person name="Ghim S.-Y."/>
            <person name="Glaser P."/>
            <person name="Goffeau A."/>
            <person name="Golightly E.J."/>
            <person name="Grandi G."/>
            <person name="Guiseppi G."/>
            <person name="Guy B.J."/>
            <person name="Haga K."/>
            <person name="Haiech J."/>
            <person name="Harwood C.R."/>
            <person name="Henaut A."/>
            <person name="Hilbert H."/>
            <person name="Holsappel S."/>
            <person name="Hosono S."/>
            <person name="Hullo M.-F."/>
            <person name="Itaya M."/>
            <person name="Jones L.-M."/>
            <person name="Joris B."/>
            <person name="Karamata D."/>
            <person name="Kasahara Y."/>
            <person name="Klaerr-Blanchard M."/>
            <person name="Klein C."/>
            <person name="Kobayashi Y."/>
            <person name="Koetter P."/>
            <person name="Koningstein G."/>
            <person name="Krogh S."/>
            <person name="Kumano M."/>
            <person name="Kurita K."/>
            <person name="Lapidus A."/>
            <person name="Lardinois S."/>
            <person name="Lauber J."/>
            <person name="Lazarevic V."/>
            <person name="Lee S.-M."/>
            <person name="Levine A."/>
            <person name="Liu H."/>
            <person name="Masuda S."/>
            <person name="Mauel C."/>
            <person name="Medigue C."/>
            <person name="Medina N."/>
            <person name="Mellado R.P."/>
            <person name="Mizuno M."/>
            <person name="Moestl D."/>
            <person name="Nakai S."/>
            <person name="Noback M."/>
            <person name="Noone D."/>
            <person name="O'Reilly M."/>
            <person name="Ogawa K."/>
            <person name="Ogiwara A."/>
            <person name="Oudega B."/>
            <person name="Park S.-H."/>
            <person name="Parro V."/>
            <person name="Pohl T.M."/>
            <person name="Portetelle D."/>
            <person name="Porwollik S."/>
            <person name="Prescott A.M."/>
            <person name="Presecan E."/>
            <person name="Pujic P."/>
            <person name="Purnelle B."/>
            <person name="Rapoport G."/>
            <person name="Rey M."/>
            <person name="Reynolds S."/>
            <person name="Rieger M."/>
            <person name="Rivolta C."/>
            <person name="Rocha E."/>
            <person name="Roche B."/>
            <person name="Rose M."/>
            <person name="Sadaie Y."/>
            <person name="Sato T."/>
            <person name="Scanlan E."/>
            <person name="Schleich S."/>
            <person name="Schroeter R."/>
            <person name="Scoffone F."/>
            <person name="Sekiguchi J."/>
            <person name="Sekowska A."/>
            <person name="Seror S.J."/>
            <person name="Serror P."/>
            <person name="Shin B.-S."/>
            <person name="Soldo B."/>
            <person name="Sorokin A."/>
            <person name="Tacconi E."/>
            <person name="Takagi T."/>
            <person name="Takahashi H."/>
            <person name="Takemaru K."/>
            <person name="Takeuchi M."/>
            <person name="Tamakoshi A."/>
            <person name="Tanaka T."/>
            <person name="Terpstra P."/>
            <person name="Tognoni A."/>
            <person name="Tosato V."/>
            <person name="Uchiyama S."/>
            <person name="Vandenbol M."/>
            <person name="Vannier F."/>
            <person name="Vassarotti A."/>
            <person name="Viari A."/>
            <person name="Wambutt R."/>
            <person name="Wedler E."/>
            <person name="Wedler H."/>
            <person name="Weitzenegger T."/>
            <person name="Winters P."/>
            <person name="Wipat A."/>
            <person name="Yamamoto H."/>
            <person name="Yamane K."/>
            <person name="Yasumoto K."/>
            <person name="Yata K."/>
            <person name="Yoshida K."/>
            <person name="Yoshikawa H.-F."/>
            <person name="Zumstein E."/>
            <person name="Yoshikawa H."/>
            <person name="Danchin A."/>
        </authorList>
    </citation>
    <scope>NUCLEOTIDE SEQUENCE [LARGE SCALE GENOMIC DNA]</scope>
    <source>
        <strain>168</strain>
    </source>
</reference>
<reference key="4">
    <citation type="journal article" date="1995" name="Mol. Microbiol.">
        <title>comK encodes the competence transcription factor, the key regulatory protein for competence development in Bacillus subtilis.</title>
        <authorList>
            <person name="van Sinderen D."/>
            <person name="Luttinger A."/>
            <person name="Kong L."/>
            <person name="Dubnau D."/>
            <person name="Venema G."/>
            <person name="Hamoen L."/>
        </authorList>
    </citation>
    <scope>FUNCTION</scope>
    <scope>INDUCTION</scope>
    <scope>DNA-BINDING</scope>
</reference>
<reference key="5">
    <citation type="journal article" date="2002" name="J. Biol. Chem.">
        <title>The bdbDC operon of Bacillus subtilis encodes thiol-disulfide oxidoreductases required for competence development.</title>
        <authorList>
            <person name="Meima R."/>
            <person name="Eschevins C."/>
            <person name="Fillinger S."/>
            <person name="Bolhuis A."/>
            <person name="Hamoen L.W."/>
            <person name="Dorenbos R."/>
            <person name="Quax W.J."/>
            <person name="van Dijl J.M."/>
            <person name="Provvedi R."/>
            <person name="Chen I."/>
            <person name="Dubnau D."/>
            <person name="Bron S."/>
        </authorList>
    </citation>
    <scope>REGULATION OF THE BDBDC OPERON</scope>
    <source>
        <strain>168</strain>
    </source>
</reference>
<reference key="6">
    <citation type="journal article" date="2002" name="Mol. Microbiol.">
        <title>Rok (YkuW) regulates genetic competence in Bacillus subtilis by directly repressing comK.</title>
        <authorList>
            <person name="Hoa T.T."/>
            <person name="Tortosa P."/>
            <person name="Albano M."/>
            <person name="Dubnau D."/>
        </authorList>
    </citation>
    <scope>FUNCTION</scope>
    <scope>INDUCTION</scope>
    <scope>DNA-BINDING</scope>
    <source>
        <strain>BD630</strain>
    </source>
</reference>
<reference key="7">
    <citation type="journal article" date="2002" name="Mol. Microbiol.">
        <title>Microarray analysis of the Bacillus subtilis K-state: genome-wide expression changes dependent on ComK.</title>
        <authorList>
            <person name="Berka R.M."/>
            <person name="Hahn J."/>
            <person name="Albano M."/>
            <person name="Draskovic I."/>
            <person name="Persuh M."/>
            <person name="Cui X."/>
            <person name="Sloma A."/>
            <person name="Widner W."/>
            <person name="Dubnau D."/>
        </authorList>
    </citation>
    <scope>FUNCTION</scope>
    <scope>REGULON</scope>
    <scope>DEVELOPMENTAL STAGE</scope>
    <scope>DISRUPTION PHENOTYPE</scope>
    <source>
        <strain>168</strain>
    </source>
</reference>
<reference key="8">
    <citation type="journal article" date="2002" name="J. Bacteriol.">
        <title>Whole-genome analysis of genes regulated by the Bacillus subtilis competence transcription factor ComK.</title>
        <authorList>
            <person name="Ogura M."/>
            <person name="Yamaguchi H."/>
            <person name="Kobayashi K."/>
            <person name="Ogasawara N."/>
            <person name="Fujita Y."/>
            <person name="Tanaka T."/>
        </authorList>
    </citation>
    <scope>FUNCTION</scope>
    <scope>REGULON</scope>
    <scope>DISRUPTION PHENOTYPE</scope>
    <source>
        <strain>168 / CU741</strain>
    </source>
</reference>
<protein>
    <recommendedName>
        <fullName>Competence transcription factor</fullName>
        <shortName>CTF</shortName>
    </recommendedName>
    <alternativeName>
        <fullName>Competence protein K</fullName>
    </alternativeName>
</protein>
<organism>
    <name type="scientific">Bacillus subtilis (strain 168)</name>
    <dbReference type="NCBI Taxonomy" id="224308"/>
    <lineage>
        <taxon>Bacteria</taxon>
        <taxon>Bacillati</taxon>
        <taxon>Bacillota</taxon>
        <taxon>Bacilli</taxon>
        <taxon>Bacillales</taxon>
        <taxon>Bacillaceae</taxon>
        <taxon>Bacillus</taxon>
    </lineage>
</organism>
<evidence type="ECO:0000269" key="1">
    <source>
    </source>
</evidence>
<evidence type="ECO:0000269" key="2">
    <source>
    </source>
</evidence>
<evidence type="ECO:0000269" key="3">
    <source>
    </source>
</evidence>
<evidence type="ECO:0000269" key="4">
    <source>
    </source>
</evidence>
<evidence type="ECO:0000269" key="5">
    <source>
    </source>
</evidence>
<evidence type="ECO:0000269" key="6">
    <source>
    </source>
</evidence>
<evidence type="ECO:0000305" key="7"/>
<comment type="function">
    <text evidence="1 2 3 4 5 6">A master regulator required for the expression of late competence genes including comC, comE, comG and the bdbDC operon (PubMed:11744713, PubMed:11918817, PubMed:11948146, PubMed:7783616, PubMed:8196543). Receives signals from SrfA, and possibly other regulatory COM genes, and transduces these signals to the late COM genes (PubMed:7783616, PubMed:8196543). Represses transcription of rok (PubMed:11849533). May repress expression of a few genes (PubMed:7783616).</text>
</comment>
<comment type="developmental stage">
    <text evidence="3">Expressed in cells competent for DNA transformation; that is 5-10% of the population (PubMed:11918817).</text>
</comment>
<comment type="induction">
    <text evidence="2 5 6">Positively regulates its own expression (PubMed:7783616). Expressed only in glucose-based minimal medium during the transition to stationary phase (PubMed:8196543). Expression is initiated at the time of transition to the post-exponential state, and exclusively in competence-stimulating medium. Repressed by AbrB and Rok (PubMed:11849533).</text>
</comment>
<comment type="disruption phenotype">
    <text evidence="3 4 6">Transformation deficient (PubMed:8196543). Loss of expression of at least 165 genes (PubMed:11918817, PubMed:11948146).</text>
</comment>
<comment type="sequence caution" evidence="7">
    <conflict type="erroneous initiation">
        <sequence resource="EMBL-CDS" id="CAA74548"/>
    </conflict>
    <text>Extended N-terminus.</text>
</comment>